<name>UN13D_HUMAN</name>
<proteinExistence type="evidence at protein level"/>
<sequence length="1090" mass="123282">MATLLSHPQQRPPFLRQAIKIRRRRVRDLQDPPPQMAPEIQPPSHHFSPEQRALLYEDALYTVLHRLGHPEPNHVTEASELLRYLQEAFHVEPEEHQQTLQRVRELEKPIFCLKATVKQAKGILGKDVSGFSDPYCLLGIEQGVGVPGGSPGSRHRQKAVVRHTIPEEETHRTQVITQTLNPVWDETFILEFEDITNASFHLDMWDLDTVESVRQKLGELTDLHGLRRIFKEARKDKGQDDFLGNVVLRLQDLRCREDQWYPLEPRTETYPDRGQCHLQFQLIHKRRATSASRSQPSYTVHLHLLQQLVSHEVTQHEAGSTSWDGSLSPQAATVLFLHATQKDLSDFHQSMAQWLAYSRLYQSLEFPSSCLLHPITSIEYQWIQGRLKAEQQEELAASFSSLLTYGLSLIRRFRSVFPLSVSDSPARLQSLLRVLVQMCKMKAFGELCPNTAPLPQLVTEALQTGTTEWFHLKQQHHQPMVQGIPEAGKALLGLVQDVIGDLHQCQRTWDKIFHNTLKIHLFSMAFRELQWLVAKRVQDHTTVVGDVVSPEMGESLFQLYISLKELCQLRMSSSERDGVLALDNFHRWFQPAIPSWLQKTYNEALARVQRAVQMDELVPLGELTKHSTSAVDLSTCFAQISHTARQLDWPDPEEAFMITVKFVEDTCRLALVYCSLIKARARELSSGQKDQGQAANMLCVVVNDMEQLRLVIGKLPAQLAWEALEQRVGAVLEQGQLQNTLHAQLQSALAGLGHEIRTGVRTLAEQLEVGIAKHIQKLVGVRESVLPEDAILPLMKFLEVELCYMNTNLVQENFSSLLTLLWTHTLTVLVEAAASQRSSSLASNRLKIALQNLEICFHAEGCGLPPKALHTATFQALQRDLELQAASSRELIRKYFCSRIQQQAETTSEELGAVTVKASYRASEQKLRVELLSASSLLPLDSNGSSDPFVQLTLEPRHEFPELAARETQKHKKDLHPLFDETFEFLVPAEPCRKAGACLLLTVLDYDTLGADDLEGEAFLPLREVPGLSGSEEPGEVPQTRLPLTYPAPNGDPILQLLEGRKGDREAQVFVRLRRHRAKQASQHALRPAP</sequence>
<dbReference type="EMBL" id="AJ578444">
    <property type="protein sequence ID" value="CAE17516.1"/>
    <property type="molecule type" value="mRNA"/>
</dbReference>
<dbReference type="EMBL" id="AK024474">
    <property type="protein sequence ID" value="BAB15764.1"/>
    <property type="status" value="ALT_INIT"/>
    <property type="molecule type" value="mRNA"/>
</dbReference>
<dbReference type="EMBL" id="AK301529">
    <property type="protein sequence ID" value="BAG63031.1"/>
    <property type="molecule type" value="mRNA"/>
</dbReference>
<dbReference type="EMBL" id="AC087289">
    <property type="status" value="NOT_ANNOTATED_CDS"/>
    <property type="molecule type" value="Genomic_DNA"/>
</dbReference>
<dbReference type="EMBL" id="BC067084">
    <property type="protein sequence ID" value="AAH67084.1"/>
    <property type="molecule type" value="mRNA"/>
</dbReference>
<dbReference type="CCDS" id="CCDS11730.1">
    <molecule id="Q70J99-1"/>
</dbReference>
<dbReference type="RefSeq" id="NP_954712.1">
    <molecule id="Q70J99-1"/>
    <property type="nucleotide sequence ID" value="NM_199242.3"/>
</dbReference>
<dbReference type="SMR" id="Q70J99"/>
<dbReference type="BioGRID" id="128383">
    <property type="interactions" value="30"/>
</dbReference>
<dbReference type="FunCoup" id="Q70J99">
    <property type="interactions" value="161"/>
</dbReference>
<dbReference type="IntAct" id="Q70J99">
    <property type="interactions" value="5"/>
</dbReference>
<dbReference type="STRING" id="9606.ENSP00000207549"/>
<dbReference type="GlyCosmos" id="Q70J99">
    <property type="glycosylation" value="1 site, 2 glycans"/>
</dbReference>
<dbReference type="GlyGen" id="Q70J99">
    <property type="glycosylation" value="1 site, 2 O-linked glycans (1 site)"/>
</dbReference>
<dbReference type="iPTMnet" id="Q70J99"/>
<dbReference type="MetOSite" id="Q70J99"/>
<dbReference type="PhosphoSitePlus" id="Q70J99"/>
<dbReference type="BioMuta" id="UNC13D"/>
<dbReference type="DMDM" id="51316668"/>
<dbReference type="jPOST" id="Q70J99"/>
<dbReference type="MassIVE" id="Q70J99"/>
<dbReference type="PaxDb" id="9606-ENSP00000207549"/>
<dbReference type="PeptideAtlas" id="Q70J99"/>
<dbReference type="ProteomicsDB" id="68558">
    <molecule id="Q70J99-1"/>
</dbReference>
<dbReference type="ProteomicsDB" id="68559">
    <molecule id="Q70J99-2"/>
</dbReference>
<dbReference type="ProteomicsDB" id="68560">
    <molecule id="Q70J99-3"/>
</dbReference>
<dbReference type="Pumba" id="Q70J99"/>
<dbReference type="Antibodypedia" id="32273">
    <property type="antibodies" value="216 antibodies from 35 providers"/>
</dbReference>
<dbReference type="DNASU" id="201294"/>
<dbReference type="Ensembl" id="ENST00000207549.9">
    <molecule id="Q70J99-1"/>
    <property type="protein sequence ID" value="ENSP00000207549.3"/>
    <property type="gene ID" value="ENSG00000092929.13"/>
</dbReference>
<dbReference type="Ensembl" id="ENST00000412096.6">
    <molecule id="Q70J99-3"/>
    <property type="protein sequence ID" value="ENSP00000388093.1"/>
    <property type="gene ID" value="ENSG00000092929.13"/>
</dbReference>
<dbReference type="GeneID" id="201294"/>
<dbReference type="KEGG" id="hsa:201294"/>
<dbReference type="MANE-Select" id="ENST00000207549.9">
    <property type="protein sequence ID" value="ENSP00000207549.3"/>
    <property type="RefSeq nucleotide sequence ID" value="NM_199242.3"/>
    <property type="RefSeq protein sequence ID" value="NP_954712.1"/>
</dbReference>
<dbReference type="UCSC" id="uc002jpp.5">
    <molecule id="Q70J99-1"/>
    <property type="organism name" value="human"/>
</dbReference>
<dbReference type="AGR" id="HGNC:23147"/>
<dbReference type="CTD" id="201294"/>
<dbReference type="DisGeNET" id="201294"/>
<dbReference type="GeneCards" id="UNC13D"/>
<dbReference type="GeneReviews" id="UNC13D"/>
<dbReference type="HGNC" id="HGNC:23147">
    <property type="gene designation" value="UNC13D"/>
</dbReference>
<dbReference type="HPA" id="ENSG00000092929">
    <property type="expression patterns" value="Tissue enhanced (bone marrow, lymphoid tissue)"/>
</dbReference>
<dbReference type="MalaCards" id="UNC13D"/>
<dbReference type="MIM" id="608897">
    <property type="type" value="gene"/>
</dbReference>
<dbReference type="MIM" id="608898">
    <property type="type" value="phenotype"/>
</dbReference>
<dbReference type="neXtProt" id="NX_Q70J99"/>
<dbReference type="OpenTargets" id="ENSG00000092929"/>
<dbReference type="Orphanet" id="540">
    <property type="disease" value="Familial hemophagocytic lymphohistiocytosis"/>
</dbReference>
<dbReference type="PharmGKB" id="PA134919958"/>
<dbReference type="VEuPathDB" id="HostDB:ENSG00000092929"/>
<dbReference type="eggNOG" id="KOG1328">
    <property type="taxonomic scope" value="Eukaryota"/>
</dbReference>
<dbReference type="GeneTree" id="ENSGT00730000110939"/>
<dbReference type="HOGENOM" id="CLU_003295_1_0_1"/>
<dbReference type="InParanoid" id="Q70J99"/>
<dbReference type="OMA" id="ICKTKAF"/>
<dbReference type="OrthoDB" id="7976202at2759"/>
<dbReference type="PAN-GO" id="Q70J99">
    <property type="GO annotations" value="2 GO annotations based on evolutionary models"/>
</dbReference>
<dbReference type="PhylomeDB" id="Q70J99"/>
<dbReference type="TreeFam" id="TF315526"/>
<dbReference type="PathwayCommons" id="Q70J99"/>
<dbReference type="Reactome" id="R-HSA-6798695">
    <property type="pathway name" value="Neutrophil degranulation"/>
</dbReference>
<dbReference type="SignaLink" id="Q70J99"/>
<dbReference type="BioGRID-ORCS" id="201294">
    <property type="hits" value="24 hits in 1159 CRISPR screens"/>
</dbReference>
<dbReference type="ChiTaRS" id="UNC13D">
    <property type="organism name" value="human"/>
</dbReference>
<dbReference type="GeneWiki" id="UNC13D"/>
<dbReference type="GenomeRNAi" id="201294"/>
<dbReference type="Pharos" id="Q70J99">
    <property type="development level" value="Tbio"/>
</dbReference>
<dbReference type="PRO" id="PR:Q70J99"/>
<dbReference type="Proteomes" id="UP000005640">
    <property type="component" value="Chromosome 17"/>
</dbReference>
<dbReference type="RNAct" id="Q70J99">
    <property type="molecule type" value="protein"/>
</dbReference>
<dbReference type="Bgee" id="ENSG00000092929">
    <property type="expression patterns" value="Expressed in granulocyte and 133 other cell types or tissues"/>
</dbReference>
<dbReference type="ExpressionAtlas" id="Q70J99">
    <property type="expression patterns" value="baseline and differential"/>
</dbReference>
<dbReference type="GO" id="GO:0035578">
    <property type="term" value="C:azurophil granule lumen"/>
    <property type="evidence" value="ECO:0000304"/>
    <property type="project" value="Reactome"/>
</dbReference>
<dbReference type="GO" id="GO:0005829">
    <property type="term" value="C:cytosol"/>
    <property type="evidence" value="ECO:0000314"/>
    <property type="project" value="HPA"/>
</dbReference>
<dbReference type="GO" id="GO:0070382">
    <property type="term" value="C:exocytic vesicle"/>
    <property type="evidence" value="ECO:0000314"/>
    <property type="project" value="UniProtKB"/>
</dbReference>
<dbReference type="GO" id="GO:0005576">
    <property type="term" value="C:extracellular region"/>
    <property type="evidence" value="ECO:0000304"/>
    <property type="project" value="Reactome"/>
</dbReference>
<dbReference type="GO" id="GO:0043231">
    <property type="term" value="C:intracellular membrane-bounded organelle"/>
    <property type="evidence" value="ECO:0000314"/>
    <property type="project" value="HPA"/>
</dbReference>
<dbReference type="GO" id="GO:0005770">
    <property type="term" value="C:late endosome"/>
    <property type="evidence" value="ECO:0007669"/>
    <property type="project" value="UniProtKB-SubCell"/>
</dbReference>
<dbReference type="GO" id="GO:0005764">
    <property type="term" value="C:lysosome"/>
    <property type="evidence" value="ECO:0000314"/>
    <property type="project" value="UniProtKB"/>
</dbReference>
<dbReference type="GO" id="GO:0016020">
    <property type="term" value="C:membrane"/>
    <property type="evidence" value="ECO:0007669"/>
    <property type="project" value="UniProtKB-SubCell"/>
</dbReference>
<dbReference type="GO" id="GO:0055037">
    <property type="term" value="C:recycling endosome"/>
    <property type="evidence" value="ECO:0007669"/>
    <property type="project" value="UniProtKB-SubCell"/>
</dbReference>
<dbReference type="GO" id="GO:0033093">
    <property type="term" value="C:Weibel-Palade body"/>
    <property type="evidence" value="ECO:0000314"/>
    <property type="project" value="UniProtKB"/>
</dbReference>
<dbReference type="GO" id="GO:0046872">
    <property type="term" value="F:metal ion binding"/>
    <property type="evidence" value="ECO:0007669"/>
    <property type="project" value="UniProtKB-KW"/>
</dbReference>
<dbReference type="GO" id="GO:0031267">
    <property type="term" value="F:small GTPase binding"/>
    <property type="evidence" value="ECO:0000314"/>
    <property type="project" value="UniProtKB"/>
</dbReference>
<dbReference type="GO" id="GO:0051607">
    <property type="term" value="P:defense response to virus"/>
    <property type="evidence" value="ECO:0007669"/>
    <property type="project" value="Ensembl"/>
</dbReference>
<dbReference type="GO" id="GO:0002467">
    <property type="term" value="P:germinal center formation"/>
    <property type="evidence" value="ECO:0007669"/>
    <property type="project" value="Ensembl"/>
</dbReference>
<dbReference type="GO" id="GO:0002432">
    <property type="term" value="P:granuloma formation"/>
    <property type="evidence" value="ECO:0007669"/>
    <property type="project" value="Ensembl"/>
</dbReference>
<dbReference type="GO" id="GO:0043320">
    <property type="term" value="P:natural killer cell degranulation"/>
    <property type="evidence" value="ECO:0007669"/>
    <property type="project" value="Ensembl"/>
</dbReference>
<dbReference type="GO" id="GO:0006909">
    <property type="term" value="P:phagocytosis"/>
    <property type="evidence" value="ECO:0007669"/>
    <property type="project" value="Ensembl"/>
</dbReference>
<dbReference type="GO" id="GO:0045921">
    <property type="term" value="P:positive regulation of exocytosis"/>
    <property type="evidence" value="ECO:0000315"/>
    <property type="project" value="UniProtKB"/>
</dbReference>
<dbReference type="GO" id="GO:1903307">
    <property type="term" value="P:positive regulation of regulated secretory pathway"/>
    <property type="evidence" value="ECO:0000316"/>
    <property type="project" value="UniProtKB"/>
</dbReference>
<dbReference type="GO" id="GO:1900026">
    <property type="term" value="P:positive regulation of substrate adhesion-dependent cell spreading"/>
    <property type="evidence" value="ECO:0007669"/>
    <property type="project" value="Ensembl"/>
</dbReference>
<dbReference type="GO" id="GO:0043304">
    <property type="term" value="P:regulation of mast cell degranulation"/>
    <property type="evidence" value="ECO:0000315"/>
    <property type="project" value="UniProtKB"/>
</dbReference>
<dbReference type="GO" id="GO:0046903">
    <property type="term" value="P:secretion"/>
    <property type="evidence" value="ECO:0000318"/>
    <property type="project" value="GO_Central"/>
</dbReference>
<dbReference type="CDD" id="cd08676">
    <property type="entry name" value="C2A_Munc13-like"/>
    <property type="match status" value="1"/>
</dbReference>
<dbReference type="CDD" id="cd04009">
    <property type="entry name" value="C2B_Munc13-like"/>
    <property type="match status" value="1"/>
</dbReference>
<dbReference type="FunFam" id="2.60.40.150:FF:000164">
    <property type="entry name" value="Protein unc-13 homolog D"/>
    <property type="match status" value="1"/>
</dbReference>
<dbReference type="FunFam" id="1.10.357.50:FF:000005">
    <property type="entry name" value="protein unc-13 homolog D"/>
    <property type="match status" value="1"/>
</dbReference>
<dbReference type="FunFam" id="2.60.40.150:FF:000123">
    <property type="entry name" value="protein unc-13 homolog D"/>
    <property type="match status" value="1"/>
</dbReference>
<dbReference type="Gene3D" id="1.10.357.50">
    <property type="match status" value="1"/>
</dbReference>
<dbReference type="Gene3D" id="1.20.58.1100">
    <property type="match status" value="1"/>
</dbReference>
<dbReference type="Gene3D" id="2.60.40.150">
    <property type="entry name" value="C2 domain"/>
    <property type="match status" value="2"/>
</dbReference>
<dbReference type="InterPro" id="IPR000008">
    <property type="entry name" value="C2_dom"/>
</dbReference>
<dbReference type="InterPro" id="IPR035892">
    <property type="entry name" value="C2_domain_sf"/>
</dbReference>
<dbReference type="InterPro" id="IPR010439">
    <property type="entry name" value="MUN_dom"/>
</dbReference>
<dbReference type="InterPro" id="IPR014770">
    <property type="entry name" value="Munc13_1"/>
</dbReference>
<dbReference type="InterPro" id="IPR014772">
    <property type="entry name" value="Munc13_dom-2"/>
</dbReference>
<dbReference type="InterPro" id="IPR052095">
    <property type="entry name" value="UNC-13_domain"/>
</dbReference>
<dbReference type="PANTHER" id="PTHR45999:SF3">
    <property type="entry name" value="PROTEIN UNC-13 HOMOLOG D"/>
    <property type="match status" value="1"/>
</dbReference>
<dbReference type="PANTHER" id="PTHR45999">
    <property type="entry name" value="UNC-13-4A, ISOFORM B"/>
    <property type="match status" value="1"/>
</dbReference>
<dbReference type="Pfam" id="PF00168">
    <property type="entry name" value="C2"/>
    <property type="match status" value="2"/>
</dbReference>
<dbReference type="Pfam" id="PF06292">
    <property type="entry name" value="MUN"/>
    <property type="match status" value="1"/>
</dbReference>
<dbReference type="SMART" id="SM00239">
    <property type="entry name" value="C2"/>
    <property type="match status" value="2"/>
</dbReference>
<dbReference type="SUPFAM" id="SSF49562">
    <property type="entry name" value="C2 domain (Calcium/lipid-binding domain, CaLB)"/>
    <property type="match status" value="2"/>
</dbReference>
<dbReference type="PROSITE" id="PS50004">
    <property type="entry name" value="C2"/>
    <property type="match status" value="2"/>
</dbReference>
<dbReference type="PROSITE" id="PS51258">
    <property type="entry name" value="MHD1"/>
    <property type="match status" value="1"/>
</dbReference>
<dbReference type="PROSITE" id="PS51259">
    <property type="entry name" value="MHD2"/>
    <property type="match status" value="1"/>
</dbReference>
<accession>Q70J99</accession>
<accession>B4DWG9</accession>
<accession>Q9H7K5</accession>
<comment type="function">
    <text evidence="7 8">Plays a role in cytotoxic granule exocytosis in lymphocytes. Required for both granule maturation and granule docking and priming at the immunologic synapse. Regulates assembly of recycling and late endosomal structures, leading to the formation of an endosomal exocytic compartment that fuses with perforin-containing granules at the immunologic synapse and licences them for exocytosis. Regulates Ca(2+)-dependent secretory lysosome exocytosis in mast cells.</text>
</comment>
<comment type="cofactor">
    <cofactor evidence="2">
        <name>Ca(2+)</name>
        <dbReference type="ChEBI" id="CHEBI:29108"/>
    </cofactor>
</comment>
<comment type="subunit">
    <text evidence="1 7 8 9">Interacts with DOC2A (By similarity). Interacts with RAB27A (PubMed:15548590, PubMed:17237785). Interacts with RHOG; the interaction increases RhoG affinity to the membrane lipids, targets UNC13D to membrane lipids and facilitates cytotoxic granule (CG) docking to the plasma membrane (PubMed:33513601).</text>
</comment>
<comment type="interaction">
    <interactant intactId="EBI-11479429">
        <id>Q70J99</id>
    </interactant>
    <interactant intactId="EBI-716881">
        <id>P51159</id>
        <label>RAB27A</label>
    </interactant>
    <organismsDiffer>false</organismsDiffer>
    <experiments>3</experiments>
</comment>
<comment type="interaction">
    <interactant intactId="EBI-11479429">
        <id>Q70J99</id>
    </interactant>
    <interactant intactId="EBI-446579">
        <id>P84095</id>
        <label>RHOG</label>
    </interactant>
    <organismsDiffer>false</organismsDiffer>
    <experiments>6</experiments>
</comment>
<comment type="subcellular location">
    <subcellularLocation>
        <location>Cytoplasm</location>
    </subcellularLocation>
    <subcellularLocation>
        <location>Membrane</location>
        <topology>Peripheral membrane protein</topology>
    </subcellularLocation>
    <subcellularLocation>
        <location>Late endosome</location>
    </subcellularLocation>
    <subcellularLocation>
        <location>Recycling endosome</location>
    </subcellularLocation>
    <subcellularLocation>
        <location>Lysosome</location>
    </subcellularLocation>
    <text>Colocalizes with cytotoxic granules at the plasma membrane. Localizes to endosomal exocytic vesicles.</text>
</comment>
<comment type="alternative products">
    <event type="alternative splicing"/>
    <isoform>
        <id>Q70J99-1</id>
        <name>1</name>
        <sequence type="displayed"/>
    </isoform>
    <isoform>
        <id>Q70J99-2</id>
        <name>2</name>
        <sequence type="described" ref="VSP_011385 VSP_011386 VSP_011387"/>
    </isoform>
    <isoform>
        <id>Q70J99-3</id>
        <name>3</name>
        <sequence type="described" ref="VSP_037949"/>
    </isoform>
</comment>
<comment type="tissue specificity">
    <text evidence="6 7">Expressed at high levels in spleen, thymus and leukocytes. Also expressed in lung and placenta, and at very low levels in brain, heart, skeletal muscle and kidney. Expressed in cytotoxic T-lymphocytes (CTL) and mast cells.</text>
</comment>
<comment type="domain">
    <text evidence="7 8">The MHD1 and MHD2 domains mediate localization on recycling endosomes and lysosome.</text>
</comment>
<comment type="disease" evidence="6">
    <disease id="DI-01574">
        <name>Hemophagocytic lymphohistiocytosis, familial, 3</name>
        <acronym>FHL3</acronym>
        <description>A rare disorder characterized by immune dysregulation with hypercytokinemia, defective function of natural killer cell, and massive infiltration of several organs by activated lymphocytes and macrophages. The clinical features of the disease include fever, hepatosplenomegaly, cytopenia, and less frequently neurological abnormalities ranging from irritability and hypotonia to seizures, cranial nerve deficits and ataxia.</description>
        <dbReference type="MIM" id="608898"/>
    </disease>
    <text>The disease is caused by variants affecting the gene represented in this entry.</text>
</comment>
<comment type="similarity">
    <text evidence="12">Belongs to the unc-13 family.</text>
</comment>
<comment type="sequence caution" evidence="12">
    <conflict type="erroneous initiation">
        <sequence resource="EMBL-CDS" id="BAB15764"/>
    </conflict>
</comment>
<comment type="online information" name="UNC13Dbase">
    <link uri="https://databases.lovd.nl/shared/genes/UNC13D"/>
    <text>UNC13D mutation db</text>
</comment>
<evidence type="ECO:0000250" key="1">
    <source>
        <dbReference type="UniProtKB" id="B2RUP2"/>
    </source>
</evidence>
<evidence type="ECO:0000255" key="2">
    <source>
        <dbReference type="PROSITE-ProRule" id="PRU00041"/>
    </source>
</evidence>
<evidence type="ECO:0000255" key="3">
    <source>
        <dbReference type="PROSITE-ProRule" id="PRU00587"/>
    </source>
</evidence>
<evidence type="ECO:0000255" key="4">
    <source>
        <dbReference type="PROSITE-ProRule" id="PRU00588"/>
    </source>
</evidence>
<evidence type="ECO:0000256" key="5">
    <source>
        <dbReference type="SAM" id="MobiDB-lite"/>
    </source>
</evidence>
<evidence type="ECO:0000269" key="6">
    <source>
    </source>
</evidence>
<evidence type="ECO:0000269" key="7">
    <source>
    </source>
</evidence>
<evidence type="ECO:0000269" key="8">
    <source>
    </source>
</evidence>
<evidence type="ECO:0000269" key="9">
    <source>
    </source>
</evidence>
<evidence type="ECO:0000303" key="10">
    <source>
    </source>
</evidence>
<evidence type="ECO:0000303" key="11">
    <source>
    </source>
</evidence>
<evidence type="ECO:0000305" key="12"/>
<evidence type="ECO:0007744" key="13">
    <source>
    </source>
</evidence>
<keyword id="KW-0025">Alternative splicing</keyword>
<keyword id="KW-0106">Calcium</keyword>
<keyword id="KW-0963">Cytoplasm</keyword>
<keyword id="KW-0967">Endosome</keyword>
<keyword id="KW-0268">Exocytosis</keyword>
<keyword id="KW-0951">Familial hemophagocytic lymphohistiocytosis</keyword>
<keyword id="KW-0458">Lysosome</keyword>
<keyword id="KW-0472">Membrane</keyword>
<keyword id="KW-0479">Metal-binding</keyword>
<keyword id="KW-0597">Phosphoprotein</keyword>
<keyword id="KW-1267">Proteomics identification</keyword>
<keyword id="KW-1185">Reference proteome</keyword>
<keyword id="KW-0677">Repeat</keyword>
<organism>
    <name type="scientific">Homo sapiens</name>
    <name type="common">Human</name>
    <dbReference type="NCBI Taxonomy" id="9606"/>
    <lineage>
        <taxon>Eukaryota</taxon>
        <taxon>Metazoa</taxon>
        <taxon>Chordata</taxon>
        <taxon>Craniata</taxon>
        <taxon>Vertebrata</taxon>
        <taxon>Euteleostomi</taxon>
        <taxon>Mammalia</taxon>
        <taxon>Eutheria</taxon>
        <taxon>Euarchontoglires</taxon>
        <taxon>Primates</taxon>
        <taxon>Haplorrhini</taxon>
        <taxon>Catarrhini</taxon>
        <taxon>Hominidae</taxon>
        <taxon>Homo</taxon>
    </lineage>
</organism>
<feature type="chain" id="PRO_0000188581" description="Protein unc-13 homolog D">
    <location>
        <begin position="1"/>
        <end position="1090"/>
    </location>
</feature>
<feature type="domain" description="C2 1" evidence="2">
    <location>
        <begin position="92"/>
        <end position="239"/>
    </location>
</feature>
<feature type="domain" description="MHD1" evidence="3">
    <location>
        <begin position="557"/>
        <end position="677"/>
    </location>
</feature>
<feature type="domain" description="MHD2" evidence="4">
    <location>
        <begin position="788"/>
        <end position="895"/>
    </location>
</feature>
<feature type="domain" description="C2 2" evidence="2">
    <location>
        <begin position="910"/>
        <end position="1035"/>
    </location>
</feature>
<feature type="region of interest" description="Interaction with RAB27A">
    <location>
        <begin position="240"/>
        <end position="543"/>
    </location>
</feature>
<feature type="region of interest" description="Disordered" evidence="5">
    <location>
        <begin position="1026"/>
        <end position="1048"/>
    </location>
</feature>
<feature type="binding site" evidence="2">
    <location>
        <position position="127"/>
    </location>
    <ligand>
        <name>Ca(2+)</name>
        <dbReference type="ChEBI" id="CHEBI:29108"/>
        <label>1</label>
    </ligand>
</feature>
<feature type="binding site" evidence="2">
    <location>
        <position position="133"/>
    </location>
    <ligand>
        <name>Ca(2+)</name>
        <dbReference type="ChEBI" id="CHEBI:29108"/>
        <label>1</label>
    </ligand>
</feature>
<feature type="binding site" evidence="2">
    <location>
        <position position="206"/>
    </location>
    <ligand>
        <name>Ca(2+)</name>
        <dbReference type="ChEBI" id="CHEBI:29108"/>
        <label>1</label>
    </ligand>
</feature>
<feature type="binding site" evidence="2">
    <location>
        <position position="208"/>
    </location>
    <ligand>
        <name>Ca(2+)</name>
        <dbReference type="ChEBI" id="CHEBI:29108"/>
        <label>1</label>
    </ligand>
</feature>
<feature type="binding site" evidence="2">
    <location>
        <position position="940"/>
    </location>
    <ligand>
        <name>Ca(2+)</name>
        <dbReference type="ChEBI" id="CHEBI:29108"/>
        <label>3</label>
    </ligand>
</feature>
<feature type="binding site" evidence="2">
    <location>
        <position position="941"/>
    </location>
    <ligand>
        <name>Ca(2+)</name>
        <dbReference type="ChEBI" id="CHEBI:29108"/>
        <label>2</label>
    </ligand>
</feature>
<feature type="binding site" evidence="2">
    <location>
        <position position="941"/>
    </location>
    <ligand>
        <name>Ca(2+)</name>
        <dbReference type="ChEBI" id="CHEBI:29108"/>
        <label>3</label>
    </ligand>
</feature>
<feature type="binding site" evidence="2">
    <location>
        <position position="947"/>
    </location>
    <ligand>
        <name>Ca(2+)</name>
        <dbReference type="ChEBI" id="CHEBI:29108"/>
        <label>2</label>
    </ligand>
</feature>
<feature type="binding site" evidence="2">
    <location>
        <position position="1005"/>
    </location>
    <ligand>
        <name>Ca(2+)</name>
        <dbReference type="ChEBI" id="CHEBI:29108"/>
        <label>2</label>
    </ligand>
</feature>
<feature type="binding site" evidence="2">
    <location>
        <position position="1005"/>
    </location>
    <ligand>
        <name>Ca(2+)</name>
        <dbReference type="ChEBI" id="CHEBI:29108"/>
        <label>3</label>
    </ligand>
</feature>
<feature type="binding site" evidence="2">
    <location>
        <position position="1007"/>
    </location>
    <ligand>
        <name>Ca(2+)</name>
        <dbReference type="ChEBI" id="CHEBI:29108"/>
        <label>2</label>
    </ligand>
</feature>
<feature type="binding site" evidence="2">
    <location>
        <position position="1007"/>
    </location>
    <ligand>
        <name>Ca(2+)</name>
        <dbReference type="ChEBI" id="CHEBI:29108"/>
        <label>3</label>
    </ligand>
</feature>
<feature type="binding site" evidence="2">
    <location>
        <position position="1013"/>
    </location>
    <ligand>
        <name>Ca(2+)</name>
        <dbReference type="ChEBI" id="CHEBI:29108"/>
        <label>3</label>
    </ligand>
</feature>
<feature type="modified residue" description="Phosphoserine" evidence="13">
    <location>
        <position position="150"/>
    </location>
</feature>
<feature type="splice variant" id="VSP_011385" description="In isoform 2." evidence="10">
    <original>R</original>
    <variation>RVGRVLGQWPCPALAAVCWVAGLAAPSVRPCLLTEASLQ</variation>
    <location>
        <position position="286"/>
    </location>
</feature>
<feature type="splice variant" id="VSP_011386" description="In isoform 2." evidence="10">
    <original>AGSTSWDG</original>
    <variation>VLPSWGWA</variation>
    <location>
        <begin position="318"/>
        <end position="325"/>
    </location>
</feature>
<feature type="splice variant" id="VSP_011387" description="In isoform 2." evidence="10">
    <location>
        <begin position="326"/>
        <end position="1090"/>
    </location>
</feature>
<feature type="splice variant" id="VSP_037949" description="In isoform 3." evidence="11">
    <original>ASQHALRPAP</original>
    <variation>GIGPSVSWPWPICLLAFLFQPLGWGPGSLGPGLQAQSLLEKGEGTLPKMRLQLPWGEGGGHY</variation>
    <location>
        <begin position="1081"/>
        <end position="1090"/>
    </location>
</feature>
<feature type="sequence variant" id="VAR_052469" description="In dbSNP:rs9904366.">
    <original>A</original>
    <variation>T</variation>
    <location>
        <position position="59"/>
    </location>
</feature>
<feature type="sequence variant" id="VAR_029771" description="In dbSNP:rs17496835.">
    <original>H</original>
    <variation>Q</variation>
    <location>
        <position position="858"/>
    </location>
</feature>
<feature type="sequence variant" id="VAR_029772" description="In dbSNP:rs1135688.">
    <original>K</original>
    <variation>E</variation>
    <location>
        <position position="867"/>
    </location>
</feature>
<feature type="mutagenesis site" description="Abolishes localization to lysosomes and interaction with RAB27A." evidence="7">
    <location>
        <begin position="608"/>
        <end position="611"/>
    </location>
</feature>
<feature type="sequence conflict" description="In Ref. 3; BAG63031." evidence="12" ref="3">
    <original>L</original>
    <variation>P</variation>
    <location>
        <position position="137"/>
    </location>
</feature>
<feature type="sequence conflict" description="In Ref. 3; BAG63031." evidence="12" ref="3">
    <original>H</original>
    <variation>R</variation>
    <location>
        <position position="476"/>
    </location>
</feature>
<feature type="sequence conflict" description="In Ref. 3; BAG63031." evidence="12" ref="3">
    <original>Q</original>
    <variation>R</variation>
    <location>
        <position position="590"/>
    </location>
</feature>
<feature type="sequence conflict" description="In Ref. 3; BAG63031." evidence="12" ref="3">
    <original>K</original>
    <variation>E</variation>
    <location>
        <position position="796"/>
    </location>
</feature>
<gene>
    <name type="primary">UNC13D</name>
</gene>
<protein>
    <recommendedName>
        <fullName>Protein unc-13 homolog D</fullName>
    </recommendedName>
    <alternativeName>
        <fullName>Munc13-4</fullName>
    </alternativeName>
</protein>
<reference key="1">
    <citation type="journal article" date="2003" name="Cell">
        <title>Munc13-4 is essential for cytolytic granules fusion and is mutated in a form of familial hemophagocytic lymphohistiocytosis (FHL3).</title>
        <authorList>
            <person name="Feldmann J."/>
            <person name="Callebaut I."/>
            <person name="Raposo G."/>
            <person name="Certain S."/>
            <person name="Bacq D."/>
            <person name="Dumont C."/>
            <person name="Lambert N."/>
            <person name="Ouachee-Chardin M."/>
            <person name="Chedville G."/>
            <person name="Tamary H."/>
            <person name="Minard-Colin V."/>
            <person name="Vilmer E."/>
            <person name="Blanche S."/>
            <person name="Le Deist F."/>
            <person name="Fischer A."/>
            <person name="de Saint Basile G."/>
        </authorList>
    </citation>
    <scope>NUCLEOTIDE SEQUENCE [MRNA] (ISOFORM 1)</scope>
    <scope>TISSUE SPECIFICITY</scope>
    <scope>SUBCELLULAR LOCATION</scope>
    <scope>INVOLVEMENT IN FHL3</scope>
    <source>
        <tissue>Blood</tissue>
    </source>
</reference>
<reference key="2">
    <citation type="journal article" date="2000" name="DNA Res.">
        <title>Characterization of long cDNA clones from human adult spleen.</title>
        <authorList>
            <person name="Hattori A."/>
            <person name="Okumura K."/>
            <person name="Nagase T."/>
            <person name="Kikuno R."/>
            <person name="Hirosawa M."/>
            <person name="Ohara O."/>
        </authorList>
    </citation>
    <scope>NUCLEOTIDE SEQUENCE [LARGE SCALE MRNA] (ISOFORM 2)</scope>
    <source>
        <tissue>Spleen</tissue>
    </source>
</reference>
<reference key="3">
    <citation type="journal article" date="2004" name="Nat. Genet.">
        <title>Complete sequencing and characterization of 21,243 full-length human cDNAs.</title>
        <authorList>
            <person name="Ota T."/>
            <person name="Suzuki Y."/>
            <person name="Nishikawa T."/>
            <person name="Otsuki T."/>
            <person name="Sugiyama T."/>
            <person name="Irie R."/>
            <person name="Wakamatsu A."/>
            <person name="Hayashi K."/>
            <person name="Sato H."/>
            <person name="Nagai K."/>
            <person name="Kimura K."/>
            <person name="Makita H."/>
            <person name="Sekine M."/>
            <person name="Obayashi M."/>
            <person name="Nishi T."/>
            <person name="Shibahara T."/>
            <person name="Tanaka T."/>
            <person name="Ishii S."/>
            <person name="Yamamoto J."/>
            <person name="Saito K."/>
            <person name="Kawai Y."/>
            <person name="Isono Y."/>
            <person name="Nakamura Y."/>
            <person name="Nagahari K."/>
            <person name="Murakami K."/>
            <person name="Yasuda T."/>
            <person name="Iwayanagi T."/>
            <person name="Wagatsuma M."/>
            <person name="Shiratori A."/>
            <person name="Sudo H."/>
            <person name="Hosoiri T."/>
            <person name="Kaku Y."/>
            <person name="Kodaira H."/>
            <person name="Kondo H."/>
            <person name="Sugawara M."/>
            <person name="Takahashi M."/>
            <person name="Kanda K."/>
            <person name="Yokoi T."/>
            <person name="Furuya T."/>
            <person name="Kikkawa E."/>
            <person name="Omura Y."/>
            <person name="Abe K."/>
            <person name="Kamihara K."/>
            <person name="Katsuta N."/>
            <person name="Sato K."/>
            <person name="Tanikawa M."/>
            <person name="Yamazaki M."/>
            <person name="Ninomiya K."/>
            <person name="Ishibashi T."/>
            <person name="Yamashita H."/>
            <person name="Murakawa K."/>
            <person name="Fujimori K."/>
            <person name="Tanai H."/>
            <person name="Kimata M."/>
            <person name="Watanabe M."/>
            <person name="Hiraoka S."/>
            <person name="Chiba Y."/>
            <person name="Ishida S."/>
            <person name="Ono Y."/>
            <person name="Takiguchi S."/>
            <person name="Watanabe S."/>
            <person name="Yosida M."/>
            <person name="Hotuta T."/>
            <person name="Kusano J."/>
            <person name="Kanehori K."/>
            <person name="Takahashi-Fujii A."/>
            <person name="Hara H."/>
            <person name="Tanase T.-O."/>
            <person name="Nomura Y."/>
            <person name="Togiya S."/>
            <person name="Komai F."/>
            <person name="Hara R."/>
            <person name="Takeuchi K."/>
            <person name="Arita M."/>
            <person name="Imose N."/>
            <person name="Musashino K."/>
            <person name="Yuuki H."/>
            <person name="Oshima A."/>
            <person name="Sasaki N."/>
            <person name="Aotsuka S."/>
            <person name="Yoshikawa Y."/>
            <person name="Matsunawa H."/>
            <person name="Ichihara T."/>
            <person name="Shiohata N."/>
            <person name="Sano S."/>
            <person name="Moriya S."/>
            <person name="Momiyama H."/>
            <person name="Satoh N."/>
            <person name="Takami S."/>
            <person name="Terashima Y."/>
            <person name="Suzuki O."/>
            <person name="Nakagawa S."/>
            <person name="Senoh A."/>
            <person name="Mizoguchi H."/>
            <person name="Goto Y."/>
            <person name="Shimizu F."/>
            <person name="Wakebe H."/>
            <person name="Hishigaki H."/>
            <person name="Watanabe T."/>
            <person name="Sugiyama A."/>
            <person name="Takemoto M."/>
            <person name="Kawakami B."/>
            <person name="Yamazaki M."/>
            <person name="Watanabe K."/>
            <person name="Kumagai A."/>
            <person name="Itakura S."/>
            <person name="Fukuzumi Y."/>
            <person name="Fujimori Y."/>
            <person name="Komiyama M."/>
            <person name="Tashiro H."/>
            <person name="Tanigami A."/>
            <person name="Fujiwara T."/>
            <person name="Ono T."/>
            <person name="Yamada K."/>
            <person name="Fujii Y."/>
            <person name="Ozaki K."/>
            <person name="Hirao M."/>
            <person name="Ohmori Y."/>
            <person name="Kawabata A."/>
            <person name="Hikiji T."/>
            <person name="Kobatake N."/>
            <person name="Inagaki H."/>
            <person name="Ikema Y."/>
            <person name="Okamoto S."/>
            <person name="Okitani R."/>
            <person name="Kawakami T."/>
            <person name="Noguchi S."/>
            <person name="Itoh T."/>
            <person name="Shigeta K."/>
            <person name="Senba T."/>
            <person name="Matsumura K."/>
            <person name="Nakajima Y."/>
            <person name="Mizuno T."/>
            <person name="Morinaga M."/>
            <person name="Sasaki M."/>
            <person name="Togashi T."/>
            <person name="Oyama M."/>
            <person name="Hata H."/>
            <person name="Watanabe M."/>
            <person name="Komatsu T."/>
            <person name="Mizushima-Sugano J."/>
            <person name="Satoh T."/>
            <person name="Shirai Y."/>
            <person name="Takahashi Y."/>
            <person name="Nakagawa K."/>
            <person name="Okumura K."/>
            <person name="Nagase T."/>
            <person name="Nomura N."/>
            <person name="Kikuchi H."/>
            <person name="Masuho Y."/>
            <person name="Yamashita R."/>
            <person name="Nakai K."/>
            <person name="Yada T."/>
            <person name="Nakamura Y."/>
            <person name="Ohara O."/>
            <person name="Isogai T."/>
            <person name="Sugano S."/>
        </authorList>
    </citation>
    <scope>NUCLEOTIDE SEQUENCE [LARGE SCALE MRNA] (ISOFORM 3)</scope>
    <source>
        <tissue>Synovium</tissue>
    </source>
</reference>
<reference key="4">
    <citation type="journal article" date="2006" name="Nature">
        <title>DNA sequence of human chromosome 17 and analysis of rearrangement in the human lineage.</title>
        <authorList>
            <person name="Zody M.C."/>
            <person name="Garber M."/>
            <person name="Adams D.J."/>
            <person name="Sharpe T."/>
            <person name="Harrow J."/>
            <person name="Lupski J.R."/>
            <person name="Nicholson C."/>
            <person name="Searle S.M."/>
            <person name="Wilming L."/>
            <person name="Young S.K."/>
            <person name="Abouelleil A."/>
            <person name="Allen N.R."/>
            <person name="Bi W."/>
            <person name="Bloom T."/>
            <person name="Borowsky M.L."/>
            <person name="Bugalter B.E."/>
            <person name="Butler J."/>
            <person name="Chang J.L."/>
            <person name="Chen C.-K."/>
            <person name="Cook A."/>
            <person name="Corum B."/>
            <person name="Cuomo C.A."/>
            <person name="de Jong P.J."/>
            <person name="DeCaprio D."/>
            <person name="Dewar K."/>
            <person name="FitzGerald M."/>
            <person name="Gilbert J."/>
            <person name="Gibson R."/>
            <person name="Gnerre S."/>
            <person name="Goldstein S."/>
            <person name="Grafham D.V."/>
            <person name="Grocock R."/>
            <person name="Hafez N."/>
            <person name="Hagopian D.S."/>
            <person name="Hart E."/>
            <person name="Norman C.H."/>
            <person name="Humphray S."/>
            <person name="Jaffe D.B."/>
            <person name="Jones M."/>
            <person name="Kamal M."/>
            <person name="Khodiyar V.K."/>
            <person name="LaButti K."/>
            <person name="Laird G."/>
            <person name="Lehoczky J."/>
            <person name="Liu X."/>
            <person name="Lokyitsang T."/>
            <person name="Loveland J."/>
            <person name="Lui A."/>
            <person name="Macdonald P."/>
            <person name="Major J.E."/>
            <person name="Matthews L."/>
            <person name="Mauceli E."/>
            <person name="McCarroll S.A."/>
            <person name="Mihalev A.H."/>
            <person name="Mudge J."/>
            <person name="Nguyen C."/>
            <person name="Nicol R."/>
            <person name="O'Leary S.B."/>
            <person name="Osoegawa K."/>
            <person name="Schwartz D.C."/>
            <person name="Shaw-Smith C."/>
            <person name="Stankiewicz P."/>
            <person name="Steward C."/>
            <person name="Swarbreck D."/>
            <person name="Venkataraman V."/>
            <person name="Whittaker C.A."/>
            <person name="Yang X."/>
            <person name="Zimmer A.R."/>
            <person name="Bradley A."/>
            <person name="Hubbard T."/>
            <person name="Birren B.W."/>
            <person name="Rogers J."/>
            <person name="Lander E.S."/>
            <person name="Nusbaum C."/>
        </authorList>
    </citation>
    <scope>NUCLEOTIDE SEQUENCE [LARGE SCALE GENOMIC DNA]</scope>
</reference>
<reference key="5">
    <citation type="journal article" date="2004" name="Genome Res.">
        <title>The status, quality, and expansion of the NIH full-length cDNA project: the Mammalian Gene Collection (MGC).</title>
        <authorList>
            <consortium name="The MGC Project Team"/>
        </authorList>
    </citation>
    <scope>NUCLEOTIDE SEQUENCE [LARGE SCALE MRNA] (ISOFORM 1)</scope>
    <source>
        <tissue>Pancreas</tissue>
    </source>
</reference>
<reference key="6">
    <citation type="journal article" date="2005" name="Mol. Biol. Cell">
        <title>Munc13-4 is an effector of rab27a and controls secretion of lysosomes in hematopoietic cells.</title>
        <authorList>
            <person name="Neeft M."/>
            <person name="Wieffer M."/>
            <person name="de Jong A.S."/>
            <person name="Negroiu G."/>
            <person name="Metz C.H."/>
            <person name="van Loon A."/>
            <person name="Griffith J."/>
            <person name="Krijgsveld J."/>
            <person name="Wulffraat N."/>
            <person name="Koch H."/>
            <person name="Heck A.J.R."/>
            <person name="Brose N."/>
            <person name="Kleijmeer M."/>
            <person name="van der Sluijs P."/>
        </authorList>
    </citation>
    <scope>FUNCTION</scope>
    <scope>SUBCELLULAR LOCATION</scope>
    <scope>INTERACTION WITH RAB27A</scope>
    <scope>TISSUE SPECIFICITY</scope>
    <scope>DOMAIN</scope>
    <scope>MUTAGENESIS OF 608-VAL--ALA-611</scope>
</reference>
<reference key="7">
    <citation type="journal article" date="2006" name="Cell">
        <title>Global, in vivo, and site-specific phosphorylation dynamics in signaling networks.</title>
        <authorList>
            <person name="Olsen J.V."/>
            <person name="Blagoev B."/>
            <person name="Gnad F."/>
            <person name="Macek B."/>
            <person name="Kumar C."/>
            <person name="Mortensen P."/>
            <person name="Mann M."/>
        </authorList>
    </citation>
    <scope>IDENTIFICATION BY MASS SPECTROMETRY [LARGE SCALE ANALYSIS]</scope>
    <source>
        <tissue>Cervix carcinoma</tissue>
    </source>
</reference>
<reference key="8">
    <citation type="journal article" date="2006" name="Nat. Biotechnol.">
        <title>A probability-based approach for high-throughput protein phosphorylation analysis and site localization.</title>
        <authorList>
            <person name="Beausoleil S.A."/>
            <person name="Villen J."/>
            <person name="Gerber S.A."/>
            <person name="Rush J."/>
            <person name="Gygi S.P."/>
        </authorList>
    </citation>
    <scope>IDENTIFICATION BY MASS SPECTROMETRY [LARGE SCALE ANALYSIS]</scope>
    <source>
        <tissue>Cervix carcinoma</tissue>
    </source>
</reference>
<reference key="9">
    <citation type="journal article" date="2007" name="Nat. Immunol.">
        <title>Secretory cytotoxic granule maturation and exocytosis require the effector protein hMunc13-4.</title>
        <authorList>
            <person name="Menager M.M."/>
            <person name="Menasche G."/>
            <person name="Romao M."/>
            <person name="Knapnougel P."/>
            <person name="Ho C.-H."/>
            <person name="Garfa M."/>
            <person name="Raposo G."/>
            <person name="Feldmann J."/>
            <person name="Fischer A."/>
            <person name="de Saint Basile G."/>
        </authorList>
    </citation>
    <scope>FUNCTION</scope>
    <scope>SUBCELLULAR LOCATION</scope>
    <scope>INTERACTION WITH RAB27A</scope>
    <scope>DOMAIN</scope>
</reference>
<reference key="10">
    <citation type="journal article" date="2008" name="Proc. Natl. Acad. Sci. U.S.A.">
        <title>A quantitative atlas of mitotic phosphorylation.</title>
        <authorList>
            <person name="Dephoure N."/>
            <person name="Zhou C."/>
            <person name="Villen J."/>
            <person name="Beausoleil S.A."/>
            <person name="Bakalarski C.E."/>
            <person name="Elledge S.J."/>
            <person name="Gygi S.P."/>
        </authorList>
    </citation>
    <scope>PHOSPHORYLATION [LARGE SCALE ANALYSIS] AT SER-150</scope>
    <scope>IDENTIFICATION BY MASS SPECTROMETRY [LARGE SCALE ANALYSIS]</scope>
    <source>
        <tissue>Cervix carcinoma</tissue>
    </source>
</reference>
<reference key="11">
    <citation type="journal article" date="2011" name="BMC Syst. Biol.">
        <title>Initial characterization of the human central proteome.</title>
        <authorList>
            <person name="Burkard T.R."/>
            <person name="Planyavsky M."/>
            <person name="Kaupe I."/>
            <person name="Breitwieser F.P."/>
            <person name="Buerckstuemmer T."/>
            <person name="Bennett K.L."/>
            <person name="Superti-Furga G."/>
            <person name="Colinge J."/>
        </authorList>
    </citation>
    <scope>IDENTIFICATION BY MASS SPECTROMETRY [LARGE SCALE ANALYSIS]</scope>
</reference>
<reference key="12">
    <citation type="journal article" date="2013" name="J. Proteome Res.">
        <title>Toward a comprehensive characterization of a human cancer cell phosphoproteome.</title>
        <authorList>
            <person name="Zhou H."/>
            <person name="Di Palma S."/>
            <person name="Preisinger C."/>
            <person name="Peng M."/>
            <person name="Polat A.N."/>
            <person name="Heck A.J."/>
            <person name="Mohammed S."/>
        </authorList>
    </citation>
    <scope>IDENTIFICATION BY MASS SPECTROMETRY [LARGE SCALE ANALYSIS]</scope>
    <source>
        <tissue>Erythroleukemia</tissue>
    </source>
</reference>
<reference key="13">
    <citation type="journal article" date="2014" name="J. Proteomics">
        <title>An enzyme assisted RP-RPLC approach for in-depth analysis of human liver phosphoproteome.</title>
        <authorList>
            <person name="Bian Y."/>
            <person name="Song C."/>
            <person name="Cheng K."/>
            <person name="Dong M."/>
            <person name="Wang F."/>
            <person name="Huang J."/>
            <person name="Sun D."/>
            <person name="Wang L."/>
            <person name="Ye M."/>
            <person name="Zou H."/>
        </authorList>
    </citation>
    <scope>IDENTIFICATION BY MASS SPECTROMETRY [LARGE SCALE ANALYSIS]</scope>
    <source>
        <tissue>Liver</tissue>
    </source>
</reference>
<reference key="14">
    <citation type="journal article" date="2015" name="Proteomics">
        <title>N-terminome analysis of the human mitochondrial proteome.</title>
        <authorList>
            <person name="Vaca Jacome A.S."/>
            <person name="Rabilloud T."/>
            <person name="Schaeffer-Reiss C."/>
            <person name="Rompais M."/>
            <person name="Ayoub D."/>
            <person name="Lane L."/>
            <person name="Bairoch A."/>
            <person name="Van Dorsselaer A."/>
            <person name="Carapito C."/>
        </authorList>
    </citation>
    <scope>IDENTIFICATION BY MASS SPECTROMETRY [LARGE SCALE ANALYSIS]</scope>
</reference>
<reference key="15">
    <citation type="journal article" date="2021" name="Blood">
        <title>RhoG deficiency abrogates cytotoxicity of human lymphocytes and causes hemophagocytic lymphohistiocytosis.</title>
        <authorList>
            <person name="Kalinichenko A."/>
            <person name="Perinetti Casoni G."/>
            <person name="Dupre L."/>
            <person name="Trotta L."/>
            <person name="Huemer J."/>
            <person name="Galgano D."/>
            <person name="German Y."/>
            <person name="Haladik B."/>
            <person name="Pazmandi J."/>
            <person name="Thian M."/>
            <person name="Yuece Petronczki O."/>
            <person name="Chiang S.C."/>
            <person name="Taskinen M."/>
            <person name="Hekkala A."/>
            <person name="Kauppila S."/>
            <person name="Lindgren O."/>
            <person name="Tapiainen T."/>
            <person name="Kraakman M.J."/>
            <person name="Vettenranta K."/>
            <person name="Lomakin A.J."/>
            <person name="Saarela J."/>
            <person name="Seppaenen M.R.J."/>
            <person name="Bryceson Y.T."/>
            <person name="Boztug K."/>
        </authorList>
    </citation>
    <scope>INTERACTION WITH RHOG</scope>
</reference>